<evidence type="ECO:0000250" key="1"/>
<evidence type="ECO:0000250" key="2">
    <source>
        <dbReference type="UniProtKB" id="A0A0D4WTV1"/>
    </source>
</evidence>
<evidence type="ECO:0000250" key="3">
    <source>
        <dbReference type="UniProtKB" id="A0A0D4WV12"/>
    </source>
</evidence>
<evidence type="ECO:0000250" key="4">
    <source>
        <dbReference type="UniProtKB" id="P0CE80"/>
    </source>
</evidence>
<evidence type="ECO:0000250" key="5">
    <source>
        <dbReference type="UniProtKB" id="Q4ZFU2"/>
    </source>
</evidence>
<evidence type="ECO:0000250" key="6">
    <source>
        <dbReference type="UniProtKB" id="Q8I914"/>
    </source>
</evidence>
<evidence type="ECO:0000255" key="7"/>
<evidence type="ECO:0000269" key="8">
    <source>
    </source>
</evidence>
<evidence type="ECO:0000269" key="9">
    <source>
    </source>
</evidence>
<evidence type="ECO:0000303" key="10">
    <source>
    </source>
</evidence>
<evidence type="ECO:0000305" key="11"/>
<evidence type="ECO:0000305" key="12">
    <source>
    </source>
</evidence>
<evidence type="ECO:0000305" key="13">
    <source>
    </source>
</evidence>
<dbReference type="EC" id="4.6.1.-" evidence="5"/>
<dbReference type="EMBL" id="GU121905">
    <property type="protein sequence ID" value="ADP00408.1"/>
    <property type="molecule type" value="mRNA"/>
</dbReference>
<dbReference type="SMR" id="E5D3Z8"/>
<dbReference type="GO" id="GO:0005576">
    <property type="term" value="C:extracellular region"/>
    <property type="evidence" value="ECO:0007669"/>
    <property type="project" value="UniProtKB-SubCell"/>
</dbReference>
<dbReference type="GO" id="GO:0016829">
    <property type="term" value="F:lyase activity"/>
    <property type="evidence" value="ECO:0007669"/>
    <property type="project" value="UniProtKB-KW"/>
</dbReference>
<dbReference type="GO" id="GO:0046872">
    <property type="term" value="F:metal ion binding"/>
    <property type="evidence" value="ECO:0007669"/>
    <property type="project" value="UniProtKB-KW"/>
</dbReference>
<dbReference type="GO" id="GO:0008081">
    <property type="term" value="F:phosphoric diester hydrolase activity"/>
    <property type="evidence" value="ECO:0007669"/>
    <property type="project" value="InterPro"/>
</dbReference>
<dbReference type="GO" id="GO:0090729">
    <property type="term" value="F:toxin activity"/>
    <property type="evidence" value="ECO:0007669"/>
    <property type="project" value="UniProtKB-KW"/>
</dbReference>
<dbReference type="GO" id="GO:0031640">
    <property type="term" value="P:killing of cells of another organism"/>
    <property type="evidence" value="ECO:0007669"/>
    <property type="project" value="UniProtKB-KW"/>
</dbReference>
<dbReference type="GO" id="GO:0016042">
    <property type="term" value="P:lipid catabolic process"/>
    <property type="evidence" value="ECO:0007669"/>
    <property type="project" value="UniProtKB-KW"/>
</dbReference>
<dbReference type="CDD" id="cd08576">
    <property type="entry name" value="GDPD_like_SMaseD_PLD"/>
    <property type="match status" value="1"/>
</dbReference>
<dbReference type="Gene3D" id="3.20.20.190">
    <property type="entry name" value="Phosphatidylinositol (PI) phosphodiesterase"/>
    <property type="match status" value="1"/>
</dbReference>
<dbReference type="InterPro" id="IPR017946">
    <property type="entry name" value="PLC-like_Pdiesterase_TIM-brl"/>
</dbReference>
<dbReference type="SUPFAM" id="SSF51695">
    <property type="entry name" value="PLC-like phosphodiesterases"/>
    <property type="match status" value="1"/>
</dbReference>
<proteinExistence type="evidence at protein level"/>
<keyword id="KW-0204">Cytolysis</keyword>
<keyword id="KW-1061">Dermonecrotic toxin</keyword>
<keyword id="KW-1015">Disulfide bond</keyword>
<keyword id="KW-0354">Hemolysis</keyword>
<keyword id="KW-0442">Lipid degradation</keyword>
<keyword id="KW-0443">Lipid metabolism</keyword>
<keyword id="KW-0456">Lyase</keyword>
<keyword id="KW-0460">Magnesium</keyword>
<keyword id="KW-0479">Metal-binding</keyword>
<keyword id="KW-0964">Secreted</keyword>
<keyword id="KW-0732">Signal</keyword>
<keyword id="KW-0800">Toxin</keyword>
<keyword id="KW-0865">Zymogen</keyword>
<reference key="1">
    <citation type="journal article" date="2011" name="J. Biochem. Mol. Toxicol.">
        <title>Two new phospholipase D isoforms of Loxosceles laeta: cloning, heterologous expression, functional characterization, and potential biotechnological application.</title>
        <authorList>
            <person name="Catalan A."/>
            <person name="Cortes W."/>
            <person name="Sagua H."/>
            <person name="Gonzalez J."/>
            <person name="Araya J.E."/>
        </authorList>
    </citation>
    <scope>NUCLEOTIDE SEQUENCE [MRNA]</scope>
    <scope>FUNCTION</scope>
    <source>
        <tissue>Venom gland</tissue>
    </source>
</reference>
<reference key="2">
    <citation type="journal article" date="2014" name="Toxicon">
        <title>Tryptophan and aspartic acid residues present in the glycerophosphoryl diester phosphodiesterase (GDPD) domain of the Loxosceles laeta phospholipase D are essential for substrate recognition.</title>
        <authorList>
            <person name="Catalan A."/>
            <person name="Cortes W."/>
            <person name="Munoz C."/>
            <person name="Araya J.E."/>
        </authorList>
    </citation>
    <scope>FUNCTION</scope>
    <scope>CATALYTIC ACTIVITY</scope>
    <scope>MUTAGENESIS OF TRP-256; SER-257; ASP-259; SER-262 AND ASP-269</scope>
</reference>
<feature type="signal peptide" evidence="7">
    <location>
        <begin position="1"/>
        <end position="21"/>
    </location>
</feature>
<feature type="propeptide" id="PRO_0000423636" evidence="1">
    <location>
        <begin position="22"/>
        <end position="26"/>
    </location>
</feature>
<feature type="chain" id="PRO_0000423637" description="Dermonecrotic toxin">
    <location>
        <begin position="27"/>
        <end position="311"/>
    </location>
</feature>
<feature type="active site" evidence="6">
    <location>
        <position position="38"/>
    </location>
</feature>
<feature type="active site" description="Nucleophile" evidence="6">
    <location>
        <position position="73"/>
    </location>
</feature>
<feature type="binding site" evidence="6">
    <location>
        <position position="58"/>
    </location>
    <ligand>
        <name>Mg(2+)</name>
        <dbReference type="ChEBI" id="CHEBI:18420"/>
    </ligand>
</feature>
<feature type="binding site" evidence="6">
    <location>
        <position position="60"/>
    </location>
    <ligand>
        <name>Mg(2+)</name>
        <dbReference type="ChEBI" id="CHEBI:18420"/>
    </ligand>
</feature>
<feature type="binding site" evidence="6">
    <location>
        <position position="117"/>
    </location>
    <ligand>
        <name>Mg(2+)</name>
        <dbReference type="ChEBI" id="CHEBI:18420"/>
    </ligand>
</feature>
<feature type="disulfide bond" evidence="6">
    <location>
        <begin position="77"/>
        <end position="83"/>
    </location>
</feature>
<feature type="mutagenesis site" description="Loss of catalytic and hemolytic activities." evidence="9">
    <original>W</original>
    <variation>S</variation>
    <location>
        <position position="256"/>
    </location>
</feature>
<feature type="mutagenesis site" description="Small decrease in catalytic activity and no change in hemolytic activity." evidence="9">
    <original>S</original>
    <variation>A</variation>
    <location>
        <position position="257"/>
    </location>
</feature>
<feature type="mutagenesis site" description="Loss of catalytic and hemolytic activities." evidence="9">
    <original>D</original>
    <variation>G</variation>
    <location>
        <position position="259"/>
    </location>
</feature>
<feature type="mutagenesis site" description="Decrease in catalytic and hemolytic activities." evidence="9">
    <original>S</original>
    <variation>A</variation>
    <location>
        <position position="262"/>
    </location>
</feature>
<feature type="mutagenesis site" description="Small decrease in catalytic activity and no change in hemolytic activity." evidence="9">
    <original>D</original>
    <variation>G</variation>
    <location>
        <position position="269"/>
    </location>
</feature>
<organism>
    <name type="scientific">Loxosceles laeta</name>
    <name type="common">South American recluse spider</name>
    <name type="synonym">Scytodes laeta</name>
    <dbReference type="NCBI Taxonomy" id="58217"/>
    <lineage>
        <taxon>Eukaryota</taxon>
        <taxon>Metazoa</taxon>
        <taxon>Ecdysozoa</taxon>
        <taxon>Arthropoda</taxon>
        <taxon>Chelicerata</taxon>
        <taxon>Arachnida</taxon>
        <taxon>Araneae</taxon>
        <taxon>Araneomorphae</taxon>
        <taxon>Haplogynae</taxon>
        <taxon>Scytodoidea</taxon>
        <taxon>Sicariidae</taxon>
        <taxon>Loxosceles</taxon>
    </lineage>
</organism>
<name>A31_LOXLA</name>
<protein>
    <recommendedName>
        <fullName>Dermonecrotic toxin</fullName>
        <ecNumber evidence="5">4.6.1.-</ecNumber>
    </recommendedName>
    <alternativeName>
        <fullName>Phospholipase D isoform 1</fullName>
        <shortName evidence="10">LlPLD1</shortName>
        <shortName>PLD1</shortName>
    </alternativeName>
    <alternativeName>
        <fullName>Sphingomyelin phosphodiesterase D</fullName>
        <shortName>SMD</shortName>
        <shortName>SMase D</shortName>
        <shortName>Sphingomyelinase D</shortName>
    </alternativeName>
</protein>
<comment type="function">
    <text evidence="2 4 8">Dermonecrotic toxins cleave the phosphodiester linkage between the phosphate and headgroup of certain phospholipids (sphingolipid and lysolipid substrates), forming an alcohol (often choline) and a cyclic phosphate (By similarity). This toxin acts on sphingomyelin (SM) (PubMed:24472346). It may also act on ceramide phosphoethanolamine (CPE), lysophosphatidylcholine (LPC) and lysophosphatidylethanolamine (LPE), but not on lysophosphatidylserine (LPS), and lysophosphatidylglycerol (LPG) (By similarity). It acts by transphosphatidylation, releasing exclusively cyclic phosphate products as second products (By similarity). Shows complement-dependent hemolysis (PubMed:21692149). Also induces dermonecrosis, vascular permeability, edema, inflammatory response, and platelet aggregation (By similarity).</text>
</comment>
<comment type="catalytic activity">
    <reaction evidence="13">
        <text>an N-(acyl)-sphingosylphosphocholine = an N-(acyl)-sphingosyl-1,3-cyclic phosphate + choline</text>
        <dbReference type="Rhea" id="RHEA:60652"/>
        <dbReference type="ChEBI" id="CHEBI:15354"/>
        <dbReference type="ChEBI" id="CHEBI:64583"/>
        <dbReference type="ChEBI" id="CHEBI:143892"/>
    </reaction>
</comment>
<comment type="catalytic activity">
    <reaction evidence="2">
        <text>an N-(acyl)-sphingosylphosphoethanolamine = an N-(acyl)-sphingosyl-1,3-cyclic phosphate + ethanolamine</text>
        <dbReference type="Rhea" id="RHEA:60648"/>
        <dbReference type="ChEBI" id="CHEBI:57603"/>
        <dbReference type="ChEBI" id="CHEBI:143891"/>
        <dbReference type="ChEBI" id="CHEBI:143892"/>
    </reaction>
</comment>
<comment type="catalytic activity">
    <reaction evidence="2">
        <text>a 1-acyl-sn-glycero-3-phosphocholine = a 1-acyl-sn-glycero-2,3-cyclic phosphate + choline</text>
        <dbReference type="Rhea" id="RHEA:60700"/>
        <dbReference type="ChEBI" id="CHEBI:15354"/>
        <dbReference type="ChEBI" id="CHEBI:58168"/>
        <dbReference type="ChEBI" id="CHEBI:143947"/>
    </reaction>
</comment>
<comment type="catalytic activity">
    <reaction evidence="2">
        <text>a 1-acyl-sn-glycero-3-phosphoethanolamine = a 1-acyl-sn-glycero-2,3-cyclic phosphate + ethanolamine</text>
        <dbReference type="Rhea" id="RHEA:60704"/>
        <dbReference type="ChEBI" id="CHEBI:57603"/>
        <dbReference type="ChEBI" id="CHEBI:64381"/>
        <dbReference type="ChEBI" id="CHEBI:143947"/>
    </reaction>
</comment>
<comment type="cofactor">
    <cofactor evidence="6">
        <name>Mg(2+)</name>
        <dbReference type="ChEBI" id="CHEBI:18420"/>
    </cofactor>
    <text evidence="6">Binds 1 Mg(2+) ion per subunit.</text>
</comment>
<comment type="activity regulation">
    <text>Catalytic activity and hemolysis are inhibited by divalent ion chelators (1,10-phenanthroline, EDTA, and EGTA).</text>
</comment>
<comment type="subcellular location">
    <subcellularLocation>
        <location evidence="12">Secreted</location>
    </subcellularLocation>
</comment>
<comment type="tissue specificity">
    <text evidence="12">Expressed by the venom gland.</text>
</comment>
<comment type="similarity">
    <text evidence="11">Belongs to the arthropod phospholipase D family. Class I subfamily.</text>
</comment>
<comment type="caution">
    <text evidence="2 3 5">The most common activity assay for dermonecrotic toxins detects enzymatic activity by monitoring choline release from substrate. Liberation of choline from sphingomyelin (SM) or lysophosphatidylcholine (LPC) is commonly assumed to result from substrate hydrolysis, giving either ceramide-1-phosphate (C1P) or lysophosphatidic acid (LPA), respectively, as a second product. However, two studies from Lajoie and colleagues (2013 and 2015) report the observation of exclusive formation of cyclic phosphate products as second products, resulting from intramolecular transphosphatidylation. Cyclic phosphates have vastly different biological properties from their monoester counterparts, and they may be relevant to the pathology of brown spider envenomation.</text>
</comment>
<accession>E5D3Z8</accession>
<sequence>MYVHLALILGCWTVVLQGAETDVGERADNRRPIWNLAHMVNAVKQIPTFLDLGANALEADVTFKGSVPTYTYHGTPCDFGRDCIRWEYFNVFLKTLREYTTPGNAKYRDGFILFVLDLKTGSLSNDQVRPAGENVAKELLQNYWNNGNNGGRAYVVLSLPDIGHYEFVRGFKEVLKKEGHEDLLEKVGYDFSGPYLPSLPTLDATHEAYKKAGVDGHIWLSDGLTNFSPLGDMARLKEAIKSRDSANGFINKIYYWSVDKYSTTRTALDVGVDGIMTNYPNVLIDVLNEDGYKDNYRLATYDDNPWETYKK</sequence>